<sequence>MNKDYRPGQDTRPLFDRIAPRYDLLNRLLSFGIDRRWRLAAVRELALAGAGRILDAATGTGDVALSIAAAYPRAEVVGVDLSMNMLRAAVPKLLPAEGRITLLQASCESLPLAAETCDAAIIAFGIRNVLQRQVALQEFSRVLKPGGRLLVLEFSQPTNPLLAGLYRCYSRHVLPRIGGLISDGAAYRYLPDSVEAFPARGEFLGMMEQSGFRHVRHRDLTGGIVTLYSGCRSLPGD</sequence>
<protein>
    <recommendedName>
        <fullName evidence="1">Ubiquinone/menaquinone biosynthesis C-methyltransferase UbiE</fullName>
        <ecNumber evidence="1">2.1.1.163</ecNumber>
        <ecNumber evidence="1">2.1.1.201</ecNumber>
    </recommendedName>
    <alternativeName>
        <fullName evidence="1">2-methoxy-6-polyprenyl-1,4-benzoquinol methylase</fullName>
    </alternativeName>
    <alternativeName>
        <fullName evidence="1">Demethylmenaquinone methyltransferase</fullName>
    </alternativeName>
</protein>
<proteinExistence type="inferred from homology"/>
<keyword id="KW-0474">Menaquinone biosynthesis</keyword>
<keyword id="KW-0489">Methyltransferase</keyword>
<keyword id="KW-1185">Reference proteome</keyword>
<keyword id="KW-0949">S-adenosyl-L-methionine</keyword>
<keyword id="KW-0808">Transferase</keyword>
<keyword id="KW-0831">Ubiquinone biosynthesis</keyword>
<name>UBIE_SYNC1</name>
<reference key="1">
    <citation type="submission" date="2005-10" db="EMBL/GenBank/DDBJ databases">
        <title>Complete sequence of Pelobacter carbinolicus DSM 2380.</title>
        <authorList>
            <person name="Copeland A."/>
            <person name="Lucas S."/>
            <person name="Lapidus A."/>
            <person name="Barry K."/>
            <person name="Detter J.C."/>
            <person name="Glavina T."/>
            <person name="Hammon N."/>
            <person name="Israni S."/>
            <person name="Pitluck S."/>
            <person name="Chertkov O."/>
            <person name="Schmutz J."/>
            <person name="Larimer F."/>
            <person name="Land M."/>
            <person name="Kyrpides N."/>
            <person name="Ivanova N."/>
            <person name="Richardson P."/>
        </authorList>
    </citation>
    <scope>NUCLEOTIDE SEQUENCE [LARGE SCALE GENOMIC DNA]</scope>
    <source>
        <strain>DSM 2380 / NBRC 103641 / GraBd1</strain>
    </source>
</reference>
<feature type="chain" id="PRO_1000187784" description="Ubiquinone/menaquinone biosynthesis C-methyltransferase UbiE">
    <location>
        <begin position="1"/>
        <end position="237"/>
    </location>
</feature>
<feature type="binding site" evidence="1">
    <location>
        <position position="60"/>
    </location>
    <ligand>
        <name>S-adenosyl-L-methionine</name>
        <dbReference type="ChEBI" id="CHEBI:59789"/>
    </ligand>
</feature>
<feature type="binding site" evidence="1">
    <location>
        <position position="80"/>
    </location>
    <ligand>
        <name>S-adenosyl-L-methionine</name>
        <dbReference type="ChEBI" id="CHEBI:59789"/>
    </ligand>
</feature>
<organism>
    <name type="scientific">Syntrophotalea carbinolica (strain DSM 2380 / NBRC 103641 / GraBd1)</name>
    <name type="common">Pelobacter carbinolicus</name>
    <dbReference type="NCBI Taxonomy" id="338963"/>
    <lineage>
        <taxon>Bacteria</taxon>
        <taxon>Pseudomonadati</taxon>
        <taxon>Thermodesulfobacteriota</taxon>
        <taxon>Desulfuromonadia</taxon>
        <taxon>Desulfuromonadales</taxon>
        <taxon>Syntrophotaleaceae</taxon>
        <taxon>Syntrophotalea</taxon>
    </lineage>
</organism>
<comment type="function">
    <text evidence="1">Methyltransferase required for the conversion of demethylmenaquinol (DMKH2) to menaquinol (MKH2) and the conversion of 2-polyprenyl-6-methoxy-1,4-benzoquinol (DDMQH2) to 2-polyprenyl-3-methyl-6-methoxy-1,4-benzoquinol (DMQH2).</text>
</comment>
<comment type="catalytic activity">
    <reaction evidence="1">
        <text>a 2-demethylmenaquinol + S-adenosyl-L-methionine = a menaquinol + S-adenosyl-L-homocysteine + H(+)</text>
        <dbReference type="Rhea" id="RHEA:42640"/>
        <dbReference type="Rhea" id="RHEA-COMP:9539"/>
        <dbReference type="Rhea" id="RHEA-COMP:9563"/>
        <dbReference type="ChEBI" id="CHEBI:15378"/>
        <dbReference type="ChEBI" id="CHEBI:18151"/>
        <dbReference type="ChEBI" id="CHEBI:55437"/>
        <dbReference type="ChEBI" id="CHEBI:57856"/>
        <dbReference type="ChEBI" id="CHEBI:59789"/>
        <dbReference type="EC" id="2.1.1.163"/>
    </reaction>
</comment>
<comment type="catalytic activity">
    <reaction evidence="1">
        <text>a 2-methoxy-6-(all-trans-polyprenyl)benzene-1,4-diol + S-adenosyl-L-methionine = a 5-methoxy-2-methyl-3-(all-trans-polyprenyl)benzene-1,4-diol + S-adenosyl-L-homocysteine + H(+)</text>
        <dbReference type="Rhea" id="RHEA:28286"/>
        <dbReference type="Rhea" id="RHEA-COMP:10858"/>
        <dbReference type="Rhea" id="RHEA-COMP:10859"/>
        <dbReference type="ChEBI" id="CHEBI:15378"/>
        <dbReference type="ChEBI" id="CHEBI:57856"/>
        <dbReference type="ChEBI" id="CHEBI:59789"/>
        <dbReference type="ChEBI" id="CHEBI:84166"/>
        <dbReference type="ChEBI" id="CHEBI:84167"/>
        <dbReference type="EC" id="2.1.1.201"/>
    </reaction>
</comment>
<comment type="pathway">
    <text evidence="1">Quinol/quinone metabolism; menaquinone biosynthesis; menaquinol from 1,4-dihydroxy-2-naphthoate: step 2/2.</text>
</comment>
<comment type="pathway">
    <text evidence="1">Cofactor biosynthesis; ubiquinone biosynthesis.</text>
</comment>
<comment type="similarity">
    <text evidence="1">Belongs to the class I-like SAM-binding methyltransferase superfamily. MenG/UbiE family.</text>
</comment>
<accession>Q3A209</accession>
<dbReference type="EC" id="2.1.1.163" evidence="1"/>
<dbReference type="EC" id="2.1.1.201" evidence="1"/>
<dbReference type="EMBL" id="CP000142">
    <property type="protein sequence ID" value="ABA89598.1"/>
    <property type="molecule type" value="Genomic_DNA"/>
</dbReference>
<dbReference type="RefSeq" id="WP_011342120.1">
    <property type="nucleotide sequence ID" value="NC_007498.2"/>
</dbReference>
<dbReference type="SMR" id="Q3A209"/>
<dbReference type="STRING" id="338963.Pcar_2359"/>
<dbReference type="KEGG" id="pca:Pcar_2359"/>
<dbReference type="eggNOG" id="COG2226">
    <property type="taxonomic scope" value="Bacteria"/>
</dbReference>
<dbReference type="HOGENOM" id="CLU_037990_0_0_7"/>
<dbReference type="OrthoDB" id="9808140at2"/>
<dbReference type="UniPathway" id="UPA00079">
    <property type="reaction ID" value="UER00169"/>
</dbReference>
<dbReference type="UniPathway" id="UPA00232"/>
<dbReference type="Proteomes" id="UP000002534">
    <property type="component" value="Chromosome"/>
</dbReference>
<dbReference type="GO" id="GO:0008425">
    <property type="term" value="F:2-methoxy-6-polyprenyl-1,4-benzoquinol methyltransferase activity"/>
    <property type="evidence" value="ECO:0007669"/>
    <property type="project" value="UniProtKB-EC"/>
</dbReference>
<dbReference type="GO" id="GO:0043770">
    <property type="term" value="F:demethylmenaquinone methyltransferase activity"/>
    <property type="evidence" value="ECO:0007669"/>
    <property type="project" value="UniProtKB-UniRule"/>
</dbReference>
<dbReference type="GO" id="GO:0009234">
    <property type="term" value="P:menaquinone biosynthetic process"/>
    <property type="evidence" value="ECO:0007669"/>
    <property type="project" value="UniProtKB-UniRule"/>
</dbReference>
<dbReference type="GO" id="GO:0032259">
    <property type="term" value="P:methylation"/>
    <property type="evidence" value="ECO:0007669"/>
    <property type="project" value="UniProtKB-KW"/>
</dbReference>
<dbReference type="CDD" id="cd02440">
    <property type="entry name" value="AdoMet_MTases"/>
    <property type="match status" value="1"/>
</dbReference>
<dbReference type="Gene3D" id="3.40.50.150">
    <property type="entry name" value="Vaccinia Virus protein VP39"/>
    <property type="match status" value="1"/>
</dbReference>
<dbReference type="HAMAP" id="MF_01813">
    <property type="entry name" value="MenG_UbiE_methyltr"/>
    <property type="match status" value="1"/>
</dbReference>
<dbReference type="InterPro" id="IPR029063">
    <property type="entry name" value="SAM-dependent_MTases_sf"/>
</dbReference>
<dbReference type="InterPro" id="IPR004033">
    <property type="entry name" value="UbiE/COQ5_MeTrFase"/>
</dbReference>
<dbReference type="InterPro" id="IPR023576">
    <property type="entry name" value="UbiE/COQ5_MeTrFase_CS"/>
</dbReference>
<dbReference type="NCBIfam" id="TIGR01934">
    <property type="entry name" value="MenG_MenH_UbiE"/>
    <property type="match status" value="1"/>
</dbReference>
<dbReference type="NCBIfam" id="NF001244">
    <property type="entry name" value="PRK00216.1-5"/>
    <property type="match status" value="1"/>
</dbReference>
<dbReference type="PANTHER" id="PTHR43591:SF24">
    <property type="entry name" value="2-METHOXY-6-POLYPRENYL-1,4-BENZOQUINOL METHYLASE, MITOCHONDRIAL"/>
    <property type="match status" value="1"/>
</dbReference>
<dbReference type="PANTHER" id="PTHR43591">
    <property type="entry name" value="METHYLTRANSFERASE"/>
    <property type="match status" value="1"/>
</dbReference>
<dbReference type="Pfam" id="PF01209">
    <property type="entry name" value="Ubie_methyltran"/>
    <property type="match status" value="1"/>
</dbReference>
<dbReference type="SUPFAM" id="SSF53335">
    <property type="entry name" value="S-adenosyl-L-methionine-dependent methyltransferases"/>
    <property type="match status" value="1"/>
</dbReference>
<dbReference type="PROSITE" id="PS51608">
    <property type="entry name" value="SAM_MT_UBIE"/>
    <property type="match status" value="1"/>
</dbReference>
<dbReference type="PROSITE" id="PS01183">
    <property type="entry name" value="UBIE_1"/>
    <property type="match status" value="1"/>
</dbReference>
<dbReference type="PROSITE" id="PS01184">
    <property type="entry name" value="UBIE_2"/>
    <property type="match status" value="1"/>
</dbReference>
<evidence type="ECO:0000255" key="1">
    <source>
        <dbReference type="HAMAP-Rule" id="MF_01813"/>
    </source>
</evidence>
<gene>
    <name evidence="1" type="primary">ubiE</name>
    <name type="ordered locus">Pcar_2359</name>
</gene>